<protein>
    <recommendedName>
        <fullName evidence="1">tRNA-2-methylthio-N(6)-dimethylallyladenosine synthase</fullName>
        <ecNumber evidence="1">2.8.4.3</ecNumber>
    </recommendedName>
    <alternativeName>
        <fullName evidence="1">(Dimethylallyl)adenosine tRNA methylthiotransferase MiaB</fullName>
    </alternativeName>
    <alternativeName>
        <fullName evidence="1">tRNA-i(6)A37 methylthiotransferase</fullName>
    </alternativeName>
</protein>
<comment type="function">
    <text evidence="1">Catalyzes the methylthiolation of N6-(dimethylallyl)adenosine (i(6)A), leading to the formation of 2-methylthio-N6-(dimethylallyl)adenosine (ms(2)i(6)A) at position 37 in tRNAs that read codons beginning with uridine.</text>
</comment>
<comment type="catalytic activity">
    <reaction evidence="1">
        <text>N(6)-dimethylallyladenosine(37) in tRNA + (sulfur carrier)-SH + AH2 + 2 S-adenosyl-L-methionine = 2-methylsulfanyl-N(6)-dimethylallyladenosine(37) in tRNA + (sulfur carrier)-H + 5'-deoxyadenosine + L-methionine + A + S-adenosyl-L-homocysteine + 2 H(+)</text>
        <dbReference type="Rhea" id="RHEA:37067"/>
        <dbReference type="Rhea" id="RHEA-COMP:10375"/>
        <dbReference type="Rhea" id="RHEA-COMP:10376"/>
        <dbReference type="Rhea" id="RHEA-COMP:14737"/>
        <dbReference type="Rhea" id="RHEA-COMP:14739"/>
        <dbReference type="ChEBI" id="CHEBI:13193"/>
        <dbReference type="ChEBI" id="CHEBI:15378"/>
        <dbReference type="ChEBI" id="CHEBI:17319"/>
        <dbReference type="ChEBI" id="CHEBI:17499"/>
        <dbReference type="ChEBI" id="CHEBI:29917"/>
        <dbReference type="ChEBI" id="CHEBI:57844"/>
        <dbReference type="ChEBI" id="CHEBI:57856"/>
        <dbReference type="ChEBI" id="CHEBI:59789"/>
        <dbReference type="ChEBI" id="CHEBI:64428"/>
        <dbReference type="ChEBI" id="CHEBI:74415"/>
        <dbReference type="ChEBI" id="CHEBI:74417"/>
        <dbReference type="EC" id="2.8.4.3"/>
    </reaction>
</comment>
<comment type="cofactor">
    <cofactor evidence="1">
        <name>[4Fe-4S] cluster</name>
        <dbReference type="ChEBI" id="CHEBI:49883"/>
    </cofactor>
    <text evidence="1">Binds 2 [4Fe-4S] clusters. One cluster is coordinated with 3 cysteines and an exchangeable S-adenosyl-L-methionine.</text>
</comment>
<comment type="subunit">
    <text evidence="1">Monomer.</text>
</comment>
<comment type="subcellular location">
    <subcellularLocation>
        <location evidence="1">Cytoplasm</location>
    </subcellularLocation>
</comment>
<comment type="similarity">
    <text evidence="1">Belongs to the methylthiotransferase family. MiaB subfamily.</text>
</comment>
<proteinExistence type="inferred from homology"/>
<keyword id="KW-0004">4Fe-4S</keyword>
<keyword id="KW-0963">Cytoplasm</keyword>
<keyword id="KW-0408">Iron</keyword>
<keyword id="KW-0411">Iron-sulfur</keyword>
<keyword id="KW-0479">Metal-binding</keyword>
<keyword id="KW-0949">S-adenosyl-L-methionine</keyword>
<keyword id="KW-0808">Transferase</keyword>
<keyword id="KW-0819">tRNA processing</keyword>
<gene>
    <name evidence="1" type="primary">miaB</name>
    <name type="ordered locus">CJE0508</name>
</gene>
<accession>Q5HW09</accession>
<feature type="chain" id="PRO_0000374199" description="tRNA-2-methylthio-N(6)-dimethylallyladenosine synthase">
    <location>
        <begin position="1"/>
        <end position="433"/>
    </location>
</feature>
<feature type="domain" description="MTTase N-terminal" evidence="1">
    <location>
        <begin position="4"/>
        <end position="119"/>
    </location>
</feature>
<feature type="domain" description="Radical SAM core" evidence="2">
    <location>
        <begin position="137"/>
        <end position="370"/>
    </location>
</feature>
<feature type="domain" description="TRAM" evidence="1">
    <location>
        <begin position="373"/>
        <end position="433"/>
    </location>
</feature>
<feature type="binding site" evidence="1">
    <location>
        <position position="13"/>
    </location>
    <ligand>
        <name>[4Fe-4S] cluster</name>
        <dbReference type="ChEBI" id="CHEBI:49883"/>
        <label>1</label>
    </ligand>
</feature>
<feature type="binding site" evidence="1">
    <location>
        <position position="50"/>
    </location>
    <ligand>
        <name>[4Fe-4S] cluster</name>
        <dbReference type="ChEBI" id="CHEBI:49883"/>
        <label>1</label>
    </ligand>
</feature>
<feature type="binding site" evidence="1">
    <location>
        <position position="82"/>
    </location>
    <ligand>
        <name>[4Fe-4S] cluster</name>
        <dbReference type="ChEBI" id="CHEBI:49883"/>
        <label>1</label>
    </ligand>
</feature>
<feature type="binding site" evidence="1">
    <location>
        <position position="151"/>
    </location>
    <ligand>
        <name>[4Fe-4S] cluster</name>
        <dbReference type="ChEBI" id="CHEBI:49883"/>
        <label>2</label>
        <note>4Fe-4S-S-AdoMet</note>
    </ligand>
</feature>
<feature type="binding site" evidence="1">
    <location>
        <position position="155"/>
    </location>
    <ligand>
        <name>[4Fe-4S] cluster</name>
        <dbReference type="ChEBI" id="CHEBI:49883"/>
        <label>2</label>
        <note>4Fe-4S-S-AdoMet</note>
    </ligand>
</feature>
<feature type="binding site" evidence="1">
    <location>
        <position position="158"/>
    </location>
    <ligand>
        <name>[4Fe-4S] cluster</name>
        <dbReference type="ChEBI" id="CHEBI:49883"/>
        <label>2</label>
        <note>4Fe-4S-S-AdoMet</note>
    </ligand>
</feature>
<reference key="1">
    <citation type="journal article" date="2005" name="PLoS Biol.">
        <title>Major structural differences and novel potential virulence mechanisms from the genomes of multiple Campylobacter species.</title>
        <authorList>
            <person name="Fouts D.E."/>
            <person name="Mongodin E.F."/>
            <person name="Mandrell R.E."/>
            <person name="Miller W.G."/>
            <person name="Rasko D.A."/>
            <person name="Ravel J."/>
            <person name="Brinkac L.M."/>
            <person name="DeBoy R.T."/>
            <person name="Parker C.T."/>
            <person name="Daugherty S.C."/>
            <person name="Dodson R.J."/>
            <person name="Durkin A.S."/>
            <person name="Madupu R."/>
            <person name="Sullivan S.A."/>
            <person name="Shetty J.U."/>
            <person name="Ayodeji M.A."/>
            <person name="Shvartsbeyn A."/>
            <person name="Schatz M.C."/>
            <person name="Badger J.H."/>
            <person name="Fraser C.M."/>
            <person name="Nelson K.E."/>
        </authorList>
    </citation>
    <scope>NUCLEOTIDE SEQUENCE [LARGE SCALE GENOMIC DNA]</scope>
    <source>
        <strain>RM1221</strain>
    </source>
</reference>
<dbReference type="EC" id="2.8.4.3" evidence="1"/>
<dbReference type="EMBL" id="CP000025">
    <property type="protein sequence ID" value="AAW35095.1"/>
    <property type="molecule type" value="Genomic_DNA"/>
</dbReference>
<dbReference type="RefSeq" id="WP_002867613.1">
    <property type="nucleotide sequence ID" value="NC_003912.7"/>
</dbReference>
<dbReference type="SMR" id="Q5HW09"/>
<dbReference type="KEGG" id="cjr:CJE0508"/>
<dbReference type="HOGENOM" id="CLU_018697_2_0_7"/>
<dbReference type="GO" id="GO:0005829">
    <property type="term" value="C:cytosol"/>
    <property type="evidence" value="ECO:0007669"/>
    <property type="project" value="TreeGrafter"/>
</dbReference>
<dbReference type="GO" id="GO:0051539">
    <property type="term" value="F:4 iron, 4 sulfur cluster binding"/>
    <property type="evidence" value="ECO:0007669"/>
    <property type="project" value="UniProtKB-UniRule"/>
</dbReference>
<dbReference type="GO" id="GO:0046872">
    <property type="term" value="F:metal ion binding"/>
    <property type="evidence" value="ECO:0007669"/>
    <property type="project" value="UniProtKB-KW"/>
</dbReference>
<dbReference type="GO" id="GO:0035597">
    <property type="term" value="F:N6-isopentenyladenosine methylthiotransferase activity"/>
    <property type="evidence" value="ECO:0007669"/>
    <property type="project" value="TreeGrafter"/>
</dbReference>
<dbReference type="CDD" id="cd01335">
    <property type="entry name" value="Radical_SAM"/>
    <property type="match status" value="1"/>
</dbReference>
<dbReference type="FunFam" id="3.40.50.12160:FF:000003">
    <property type="entry name" value="CDK5 regulatory subunit-associated protein 1"/>
    <property type="match status" value="1"/>
</dbReference>
<dbReference type="FunFam" id="3.80.30.20:FF:000001">
    <property type="entry name" value="tRNA-2-methylthio-N(6)-dimethylallyladenosine synthase 2"/>
    <property type="match status" value="1"/>
</dbReference>
<dbReference type="Gene3D" id="3.40.50.12160">
    <property type="entry name" value="Methylthiotransferase, N-terminal domain"/>
    <property type="match status" value="1"/>
</dbReference>
<dbReference type="Gene3D" id="3.80.30.20">
    <property type="entry name" value="tm_1862 like domain"/>
    <property type="match status" value="1"/>
</dbReference>
<dbReference type="HAMAP" id="MF_01864">
    <property type="entry name" value="tRNA_metthiotr_MiaB"/>
    <property type="match status" value="1"/>
</dbReference>
<dbReference type="InterPro" id="IPR006638">
    <property type="entry name" value="Elp3/MiaA/NifB-like_rSAM"/>
</dbReference>
<dbReference type="InterPro" id="IPR005839">
    <property type="entry name" value="Methylthiotransferase"/>
</dbReference>
<dbReference type="InterPro" id="IPR020612">
    <property type="entry name" value="Methylthiotransferase_CS"/>
</dbReference>
<dbReference type="InterPro" id="IPR013848">
    <property type="entry name" value="Methylthiotransferase_N"/>
</dbReference>
<dbReference type="InterPro" id="IPR038135">
    <property type="entry name" value="Methylthiotransferase_N_sf"/>
</dbReference>
<dbReference type="InterPro" id="IPR006463">
    <property type="entry name" value="MiaB_methiolase"/>
</dbReference>
<dbReference type="InterPro" id="IPR007197">
    <property type="entry name" value="rSAM"/>
</dbReference>
<dbReference type="InterPro" id="IPR023404">
    <property type="entry name" value="rSAM_horseshoe"/>
</dbReference>
<dbReference type="InterPro" id="IPR002792">
    <property type="entry name" value="TRAM_dom"/>
</dbReference>
<dbReference type="NCBIfam" id="TIGR01574">
    <property type="entry name" value="miaB-methiolase"/>
    <property type="match status" value="1"/>
</dbReference>
<dbReference type="NCBIfam" id="TIGR00089">
    <property type="entry name" value="MiaB/RimO family radical SAM methylthiotransferase"/>
    <property type="match status" value="1"/>
</dbReference>
<dbReference type="PANTHER" id="PTHR43020">
    <property type="entry name" value="CDK5 REGULATORY SUBUNIT-ASSOCIATED PROTEIN 1"/>
    <property type="match status" value="1"/>
</dbReference>
<dbReference type="PANTHER" id="PTHR43020:SF2">
    <property type="entry name" value="MITOCHONDRIAL TRNA METHYLTHIOTRANSFERASE CDK5RAP1"/>
    <property type="match status" value="1"/>
</dbReference>
<dbReference type="Pfam" id="PF04055">
    <property type="entry name" value="Radical_SAM"/>
    <property type="match status" value="1"/>
</dbReference>
<dbReference type="Pfam" id="PF01938">
    <property type="entry name" value="TRAM"/>
    <property type="match status" value="1"/>
</dbReference>
<dbReference type="Pfam" id="PF00919">
    <property type="entry name" value="UPF0004"/>
    <property type="match status" value="1"/>
</dbReference>
<dbReference type="SFLD" id="SFLDF00273">
    <property type="entry name" value="(dimethylallyl)adenosine_tRNA"/>
    <property type="match status" value="1"/>
</dbReference>
<dbReference type="SFLD" id="SFLDG01082">
    <property type="entry name" value="B12-binding_domain_containing"/>
    <property type="match status" value="1"/>
</dbReference>
<dbReference type="SFLD" id="SFLDG01061">
    <property type="entry name" value="methylthiotransferase"/>
    <property type="match status" value="1"/>
</dbReference>
<dbReference type="SMART" id="SM00729">
    <property type="entry name" value="Elp3"/>
    <property type="match status" value="1"/>
</dbReference>
<dbReference type="SUPFAM" id="SSF102114">
    <property type="entry name" value="Radical SAM enzymes"/>
    <property type="match status" value="1"/>
</dbReference>
<dbReference type="PROSITE" id="PS51449">
    <property type="entry name" value="MTTASE_N"/>
    <property type="match status" value="1"/>
</dbReference>
<dbReference type="PROSITE" id="PS01278">
    <property type="entry name" value="MTTASE_RADICAL"/>
    <property type="match status" value="1"/>
</dbReference>
<dbReference type="PROSITE" id="PS51918">
    <property type="entry name" value="RADICAL_SAM"/>
    <property type="match status" value="1"/>
</dbReference>
<dbReference type="PROSITE" id="PS50926">
    <property type="entry name" value="TRAM"/>
    <property type="match status" value="1"/>
</dbReference>
<name>MIAB_CAMJR</name>
<evidence type="ECO:0000255" key="1">
    <source>
        <dbReference type="HAMAP-Rule" id="MF_01864"/>
    </source>
</evidence>
<evidence type="ECO:0000255" key="2">
    <source>
        <dbReference type="PROSITE-ProRule" id="PRU01266"/>
    </source>
</evidence>
<organism>
    <name type="scientific">Campylobacter jejuni (strain RM1221)</name>
    <dbReference type="NCBI Taxonomy" id="195099"/>
    <lineage>
        <taxon>Bacteria</taxon>
        <taxon>Pseudomonadati</taxon>
        <taxon>Campylobacterota</taxon>
        <taxon>Epsilonproteobacteria</taxon>
        <taxon>Campylobacterales</taxon>
        <taxon>Campylobacteraceae</taxon>
        <taxon>Campylobacter</taxon>
    </lineage>
</organism>
<sequence>MSAKKLFIQTLGCAMNVRDSEHMIAELTQKENYALTEDIKEADLILINTCSVREKPVHKLFSEVGGFEKVKKEGAKIGVCGCTASHLGNEIFKRAPYVDFVLGARNISKITQAIKTPKFMGVDIDYDESEFAFADFRNSIYKSYINISIGCDKHCTYCIVPHTRGDEISIPFNIIYKEAQKAVEKGAKEIFLLGQNVNNYGKRFRNEHKKMDFSDLLEELSTIEDLERIRFTSPHPLHMDDKFLEVFANNPKVCKSMHMPLQSGSSEILKAMKRGYTKEWYLNRALKLRELCPNVSISTDIIVAFPGESEKDFEETMDVLEKVRFEQIFSFKYSKRPLTKAATMPNQIDEETASRRLSTLQNRHSEILDEIVKKQENKTFKVLFEELRAGNSIAGRTDNNFLVQVEGSEELLGQFKEVKITNAKRMVLYGEIV</sequence>